<sequence length="898" mass="100634">MRLFVSEGAPGSLPVLAAAGRAQGRAELLISTVGPEECVVPFLTRPKVPVLQLDSGNYLFSTSAICRYFFLLSGWEQDDLTNQWLEWEATELQPALSAALYYLVVQGKKGEDVLGPVRRALTHIDHSLSRRSCPFLAGETESLADIVLWGALYPLLQDPSYLPEELGALHSWFQTLSSQEPCQRAAETVLKQQGVLALRPYLQKQPQPSSLEGRLVSNEPEEEELATLSEEEIAVAVAAWEKGLESLPPLRPQQNPVLPVAGERNVLITSALPYVNNVPHLGNIIGCVLSADVFARYSRLRQWNTLYLCGTDEYGTATETKAMEEGLTPQEICDKYHVIHADIYRWFNISFDFFGRTTTPQQTKITQDIFQRLLARGFVLQDTVEQLRCEHCARFLADRFVEGVCPFCGYEEARGDQCDKCGKLINAIELKKPQCKVCRSCPVVKSSQHLFLDLPKLAARVEEWLEKTLPGSDWTANARFIIRSWLRDGLKPRCITRDLKWGTPVPLEGFEDKVFYVWFDATIGYLSITANYTDQWEKWWKNPEQVNLYQFMAKDNVPFHGIVFPSSALGAEDNYTLVSHLIATEYLNYEDGKFSKSRGVGVFGDMAQDTGIPADIWRFYLLYNRPEGQDSAFSWTDMLFKNNSELLNNLGNFINRAGMFVSKFFGGFVPEMVLTSDDQRLLTHITLELQHYHQLLEKVRIRDALRSILTISRHGNQYIQVNEPWKRIKGGEADRQRAGTVTGLAVNIAALLSVMLQPYMPTVSATIQAQLQLPPPACSILPTNFLCTLPAGHQIGTVSPLFQKLENDQIESLKQRFSGGQAKASPKTAAGLTTAGPQQIQALTEEVTKQGNIVRELKAQKADKNQIAAEVAKLLDLKKQLALAEGKPLETSKGKKKK</sequence>
<comment type="function">
    <text evidence="2">Catalyzes the specific attachment of an amino acid to its cognate tRNA in a 2 step reaction: the amino acid (AA) is first activated by ATP to form AA-AMP and then transferred to the acceptor end of the tRNA. Plays a role in the synthesis of ribosomal RNA in the nucleolus.</text>
</comment>
<comment type="catalytic activity">
    <reaction evidence="2">
        <text>tRNA(Met) + L-methionine + ATP = L-methionyl-tRNA(Met) + AMP + diphosphate</text>
        <dbReference type="Rhea" id="RHEA:13481"/>
        <dbReference type="Rhea" id="RHEA-COMP:9667"/>
        <dbReference type="Rhea" id="RHEA-COMP:9698"/>
        <dbReference type="ChEBI" id="CHEBI:30616"/>
        <dbReference type="ChEBI" id="CHEBI:33019"/>
        <dbReference type="ChEBI" id="CHEBI:57844"/>
        <dbReference type="ChEBI" id="CHEBI:78442"/>
        <dbReference type="ChEBI" id="CHEBI:78530"/>
        <dbReference type="ChEBI" id="CHEBI:456215"/>
        <dbReference type="EC" id="6.1.1.10"/>
    </reaction>
</comment>
<comment type="subunit">
    <text evidence="2">Monomer. Part of a multisubunit complex that groups tRNA ligases for Arg (RARS1), Asp (DARS1), Gln (QARS1), Ile (IARS1), Leu (LARS1), Lys (KARS1), Met (MARS1) the bifunctional ligase for Glu and Pro (EPRS1) and the auxiliary subunits AIMP1/p43, AIMP2/p38 and EEF1E1/p18. Forms a linear complex that contains MARS1, EEF1E1, EPRS1 and AIMP2 that is at the core of the multisubunit complex.</text>
</comment>
<comment type="subcellular location">
    <subcellularLocation>
        <location evidence="2">Cytoplasm</location>
        <location evidence="2">Cytosol</location>
    </subcellularLocation>
    <subcellularLocation>
        <location evidence="2">Nucleus</location>
        <location evidence="2">Nucleolus</location>
    </subcellularLocation>
    <text evidence="2">Localizes to the nucleolus in proliferative cells but disappears in quiescent cells.</text>
</comment>
<comment type="similarity">
    <text evidence="4">Belongs to the class-I aminoacyl-tRNA synthetase family.</text>
</comment>
<evidence type="ECO:0000250" key="1"/>
<evidence type="ECO:0000250" key="2">
    <source>
        <dbReference type="UniProtKB" id="P56192"/>
    </source>
</evidence>
<evidence type="ECO:0000250" key="3">
    <source>
        <dbReference type="UniProtKB" id="Q68FL6"/>
    </source>
</evidence>
<evidence type="ECO:0000305" key="4"/>
<feature type="chain" id="PRO_0000246786" description="Methionine--tRNA ligase, cytoplasmic">
    <location>
        <begin position="1"/>
        <end position="898"/>
    </location>
</feature>
<feature type="domain" description="GST C-terminal">
    <location>
        <begin position="74"/>
        <end position="198"/>
    </location>
</feature>
<feature type="domain" description="WHEP-TRS">
    <location>
        <begin position="839"/>
        <end position="895"/>
    </location>
</feature>
<feature type="short sequence motif" description="'HIGH' region">
    <location>
        <begin position="273"/>
        <end position="283"/>
    </location>
</feature>
<feature type="short sequence motif" description="'KMSKS' region">
    <location>
        <begin position="593"/>
        <end position="597"/>
    </location>
</feature>
<feature type="binding site" evidence="1">
    <location>
        <position position="596"/>
    </location>
    <ligand>
        <name>ATP</name>
        <dbReference type="ChEBI" id="CHEBI:30616"/>
    </ligand>
</feature>
<feature type="modified residue" description="Phosphoserine" evidence="3">
    <location>
        <position position="825"/>
    </location>
</feature>
<feature type="modified residue" description="Phosphothreonine" evidence="3">
    <location>
        <position position="833"/>
    </location>
</feature>
<accession>Q2T9L8</accession>
<name>SYMC_BOVIN</name>
<keyword id="KW-0030">Aminoacyl-tRNA synthetase</keyword>
<keyword id="KW-0067">ATP-binding</keyword>
<keyword id="KW-0963">Cytoplasm</keyword>
<keyword id="KW-0436">Ligase</keyword>
<keyword id="KW-0547">Nucleotide-binding</keyword>
<keyword id="KW-0539">Nucleus</keyword>
<keyword id="KW-0597">Phosphoprotein</keyword>
<keyword id="KW-0648">Protein biosynthesis</keyword>
<keyword id="KW-1185">Reference proteome</keyword>
<keyword id="KW-0694">RNA-binding</keyword>
<keyword id="KW-0820">tRNA-binding</keyword>
<reference key="1">
    <citation type="submission" date="2005-12" db="EMBL/GenBank/DDBJ databases">
        <authorList>
            <consortium name="NIH - Mammalian Gene Collection (MGC) project"/>
        </authorList>
    </citation>
    <scope>NUCLEOTIDE SEQUENCE [LARGE SCALE MRNA]</scope>
    <source>
        <strain>Crossbred X Angus</strain>
        <tissue>Liver</tissue>
    </source>
</reference>
<organism>
    <name type="scientific">Bos taurus</name>
    <name type="common">Bovine</name>
    <dbReference type="NCBI Taxonomy" id="9913"/>
    <lineage>
        <taxon>Eukaryota</taxon>
        <taxon>Metazoa</taxon>
        <taxon>Chordata</taxon>
        <taxon>Craniata</taxon>
        <taxon>Vertebrata</taxon>
        <taxon>Euteleostomi</taxon>
        <taxon>Mammalia</taxon>
        <taxon>Eutheria</taxon>
        <taxon>Laurasiatheria</taxon>
        <taxon>Artiodactyla</taxon>
        <taxon>Ruminantia</taxon>
        <taxon>Pecora</taxon>
        <taxon>Bovidae</taxon>
        <taxon>Bovinae</taxon>
        <taxon>Bos</taxon>
    </lineage>
</organism>
<dbReference type="EC" id="6.1.1.10" evidence="2"/>
<dbReference type="EMBL" id="BC111362">
    <property type="protein sequence ID" value="AAI11363.1"/>
    <property type="molecule type" value="mRNA"/>
</dbReference>
<dbReference type="RefSeq" id="NP_001033180.1">
    <property type="nucleotide sequence ID" value="NM_001038091.2"/>
</dbReference>
<dbReference type="SMR" id="Q2T9L8"/>
<dbReference type="FunCoup" id="Q2T9L8">
    <property type="interactions" value="3165"/>
</dbReference>
<dbReference type="STRING" id="9913.ENSBTAP00000057583"/>
<dbReference type="PaxDb" id="9913-ENSBTAP00000024487"/>
<dbReference type="PeptideAtlas" id="Q2T9L8"/>
<dbReference type="GeneID" id="512531"/>
<dbReference type="KEGG" id="bta:512531"/>
<dbReference type="CTD" id="4141"/>
<dbReference type="eggNOG" id="KOG0867">
    <property type="taxonomic scope" value="Eukaryota"/>
</dbReference>
<dbReference type="eggNOG" id="KOG1247">
    <property type="taxonomic scope" value="Eukaryota"/>
</dbReference>
<dbReference type="InParanoid" id="Q2T9L8"/>
<dbReference type="OrthoDB" id="5844513at2759"/>
<dbReference type="Proteomes" id="UP000009136">
    <property type="component" value="Unplaced"/>
</dbReference>
<dbReference type="GO" id="GO:0017101">
    <property type="term" value="C:aminoacyl-tRNA synthetase multienzyme complex"/>
    <property type="evidence" value="ECO:0000250"/>
    <property type="project" value="UniProtKB"/>
</dbReference>
<dbReference type="GO" id="GO:0005829">
    <property type="term" value="C:cytosol"/>
    <property type="evidence" value="ECO:0000318"/>
    <property type="project" value="GO_Central"/>
</dbReference>
<dbReference type="GO" id="GO:0005730">
    <property type="term" value="C:nucleolus"/>
    <property type="evidence" value="ECO:0007669"/>
    <property type="project" value="UniProtKB-SubCell"/>
</dbReference>
<dbReference type="GO" id="GO:0005524">
    <property type="term" value="F:ATP binding"/>
    <property type="evidence" value="ECO:0007669"/>
    <property type="project" value="UniProtKB-KW"/>
</dbReference>
<dbReference type="GO" id="GO:0004825">
    <property type="term" value="F:methionine-tRNA ligase activity"/>
    <property type="evidence" value="ECO:0000250"/>
    <property type="project" value="UniProtKB"/>
</dbReference>
<dbReference type="GO" id="GO:0000049">
    <property type="term" value="F:tRNA binding"/>
    <property type="evidence" value="ECO:0007669"/>
    <property type="project" value="UniProtKB-KW"/>
</dbReference>
<dbReference type="GO" id="GO:0006431">
    <property type="term" value="P:methionyl-tRNA aminoacylation"/>
    <property type="evidence" value="ECO:0000250"/>
    <property type="project" value="UniProtKB"/>
</dbReference>
<dbReference type="CDD" id="cd07957">
    <property type="entry name" value="Anticodon_Ia_Met"/>
    <property type="match status" value="1"/>
</dbReference>
<dbReference type="CDD" id="cd10307">
    <property type="entry name" value="GST_C_MetRS_N"/>
    <property type="match status" value="1"/>
</dbReference>
<dbReference type="CDD" id="cd00814">
    <property type="entry name" value="MetRS_core"/>
    <property type="match status" value="1"/>
</dbReference>
<dbReference type="CDD" id="cd00939">
    <property type="entry name" value="MetRS_RNA"/>
    <property type="match status" value="1"/>
</dbReference>
<dbReference type="FunFam" id="2.20.28.20:FF:000001">
    <property type="entry name" value="Methionine--tRNA ligase"/>
    <property type="match status" value="1"/>
</dbReference>
<dbReference type="FunFam" id="1.10.287.10:FF:000009">
    <property type="entry name" value="Methionine--tRNA ligase, cytoplasmic"/>
    <property type="match status" value="1"/>
</dbReference>
<dbReference type="FunFam" id="1.20.1050.10:FF:000026">
    <property type="entry name" value="Methionine--tRNA ligase, cytoplasmic"/>
    <property type="match status" value="1"/>
</dbReference>
<dbReference type="FunFam" id="1.10.730.10:FF:000010">
    <property type="entry name" value="methionine--tRNA ligase, cytoplasmic"/>
    <property type="match status" value="1"/>
</dbReference>
<dbReference type="FunFam" id="3.40.30.10:FF:000136">
    <property type="entry name" value="methionine--tRNA ligase, cytoplasmic"/>
    <property type="match status" value="1"/>
</dbReference>
<dbReference type="Gene3D" id="1.20.1050.10">
    <property type="match status" value="1"/>
</dbReference>
<dbReference type="Gene3D" id="3.40.30.10">
    <property type="entry name" value="Glutaredoxin"/>
    <property type="match status" value="1"/>
</dbReference>
<dbReference type="Gene3D" id="3.40.50.620">
    <property type="entry name" value="HUPs"/>
    <property type="match status" value="1"/>
</dbReference>
<dbReference type="Gene3D" id="1.10.730.10">
    <property type="entry name" value="Isoleucyl-tRNA Synthetase, Domain 1"/>
    <property type="match status" value="1"/>
</dbReference>
<dbReference type="Gene3D" id="2.20.28.20">
    <property type="entry name" value="Methionyl-tRNA synthetase, Zn-domain"/>
    <property type="match status" value="1"/>
</dbReference>
<dbReference type="Gene3D" id="1.10.287.10">
    <property type="entry name" value="S15/NS1, RNA-binding"/>
    <property type="match status" value="1"/>
</dbReference>
<dbReference type="HAMAP" id="MF_00098">
    <property type="entry name" value="Met_tRNA_synth_type1"/>
    <property type="match status" value="1"/>
</dbReference>
<dbReference type="InterPro" id="IPR001412">
    <property type="entry name" value="aa-tRNA-synth_I_CS"/>
</dbReference>
<dbReference type="InterPro" id="IPR041872">
    <property type="entry name" value="Anticodon_Met"/>
</dbReference>
<dbReference type="InterPro" id="IPR010987">
    <property type="entry name" value="Glutathione-S-Trfase_C-like"/>
</dbReference>
<dbReference type="InterPro" id="IPR036282">
    <property type="entry name" value="Glutathione-S-Trfase_C_sf"/>
</dbReference>
<dbReference type="InterPro" id="IPR004046">
    <property type="entry name" value="GST_C"/>
</dbReference>
<dbReference type="InterPro" id="IPR041598">
    <property type="entry name" value="MARS_N"/>
</dbReference>
<dbReference type="InterPro" id="IPR023458">
    <property type="entry name" value="Met-tRNA_ligase_1"/>
</dbReference>
<dbReference type="InterPro" id="IPR014758">
    <property type="entry name" value="Met-tRNA_synth"/>
</dbReference>
<dbReference type="InterPro" id="IPR015413">
    <property type="entry name" value="Methionyl/Leucyl_tRNA_Synth"/>
</dbReference>
<dbReference type="InterPro" id="IPR033911">
    <property type="entry name" value="MetRS_core"/>
</dbReference>
<dbReference type="InterPro" id="IPR029038">
    <property type="entry name" value="MetRS_Zn"/>
</dbReference>
<dbReference type="InterPro" id="IPR014729">
    <property type="entry name" value="Rossmann-like_a/b/a_fold"/>
</dbReference>
<dbReference type="InterPro" id="IPR009080">
    <property type="entry name" value="tRNAsynth_Ia_anticodon-bd"/>
</dbReference>
<dbReference type="InterPro" id="IPR009068">
    <property type="entry name" value="uS15_NS1_RNA-bd_sf"/>
</dbReference>
<dbReference type="InterPro" id="IPR000738">
    <property type="entry name" value="WHEP-TRS_dom"/>
</dbReference>
<dbReference type="NCBIfam" id="TIGR00398">
    <property type="entry name" value="metG"/>
    <property type="match status" value="1"/>
</dbReference>
<dbReference type="NCBIfam" id="NF001100">
    <property type="entry name" value="PRK00133.1"/>
    <property type="match status" value="1"/>
</dbReference>
<dbReference type="PANTHER" id="PTHR45765">
    <property type="entry name" value="METHIONINE--TRNA LIGASE"/>
    <property type="match status" value="1"/>
</dbReference>
<dbReference type="PANTHER" id="PTHR45765:SF1">
    <property type="entry name" value="METHIONINE--TRNA LIGASE, CYTOPLASMIC"/>
    <property type="match status" value="1"/>
</dbReference>
<dbReference type="Pfam" id="PF19303">
    <property type="entry name" value="Anticodon_3"/>
    <property type="match status" value="1"/>
</dbReference>
<dbReference type="Pfam" id="PF00043">
    <property type="entry name" value="GST_C"/>
    <property type="match status" value="1"/>
</dbReference>
<dbReference type="Pfam" id="PF18485">
    <property type="entry name" value="GST_N_5"/>
    <property type="match status" value="1"/>
</dbReference>
<dbReference type="Pfam" id="PF09334">
    <property type="entry name" value="tRNA-synt_1g"/>
    <property type="match status" value="1"/>
</dbReference>
<dbReference type="Pfam" id="PF00458">
    <property type="entry name" value="WHEP-TRS"/>
    <property type="match status" value="1"/>
</dbReference>
<dbReference type="PRINTS" id="PR01041">
    <property type="entry name" value="TRNASYNTHMET"/>
</dbReference>
<dbReference type="SMART" id="SM00991">
    <property type="entry name" value="WHEP-TRS"/>
    <property type="match status" value="1"/>
</dbReference>
<dbReference type="SUPFAM" id="SSF47323">
    <property type="entry name" value="Anticodon-binding domain of a subclass of class I aminoacyl-tRNA synthetases"/>
    <property type="match status" value="1"/>
</dbReference>
<dbReference type="SUPFAM" id="SSF47616">
    <property type="entry name" value="GST C-terminal domain-like"/>
    <property type="match status" value="1"/>
</dbReference>
<dbReference type="SUPFAM" id="SSF57770">
    <property type="entry name" value="Methionyl-tRNA synthetase (MetRS), Zn-domain"/>
    <property type="match status" value="1"/>
</dbReference>
<dbReference type="SUPFAM" id="SSF52374">
    <property type="entry name" value="Nucleotidylyl transferase"/>
    <property type="match status" value="1"/>
</dbReference>
<dbReference type="SUPFAM" id="SSF47060">
    <property type="entry name" value="S15/NS1 RNA-binding domain"/>
    <property type="match status" value="1"/>
</dbReference>
<dbReference type="PROSITE" id="PS00178">
    <property type="entry name" value="AA_TRNA_LIGASE_I"/>
    <property type="match status" value="1"/>
</dbReference>
<dbReference type="PROSITE" id="PS50405">
    <property type="entry name" value="GST_CTER"/>
    <property type="match status" value="1"/>
</dbReference>
<dbReference type="PROSITE" id="PS00762">
    <property type="entry name" value="WHEP_TRS_1"/>
    <property type="match status" value="1"/>
</dbReference>
<dbReference type="PROSITE" id="PS51185">
    <property type="entry name" value="WHEP_TRS_2"/>
    <property type="match status" value="1"/>
</dbReference>
<gene>
    <name type="primary">MARS1</name>
    <name type="synonym">MARS</name>
</gene>
<proteinExistence type="evidence at transcript level"/>
<protein>
    <recommendedName>
        <fullName>Methionine--tRNA ligase, cytoplasmic</fullName>
        <ecNumber evidence="2">6.1.1.10</ecNumber>
    </recommendedName>
    <alternativeName>
        <fullName>Methionyl-tRNA synthetase</fullName>
        <shortName>MetRS</shortName>
    </alternativeName>
</protein>